<sequence length="2641" mass="295080">MHSTSGLAPVFRVEENHMIRNRENLERPISKKGTITLLSKMPMGFVLNSCSCAYIDNLLAHSSIHRVKPHSFMIQRLVVICGRSSPSLPNHAANIILSAFNFCQIEAPAKKFLEEDAALSLFHTILSYSTVTQINRSGIEILGAQRLTSALCDLIYAYTKTMDDMVASKTLTHLCKKLAGLFDPLVVLPFISKLAKSRRLRHYLQPLFLGHCEYTSDTWGVSPEGAEIYNQIARGNFTTQTLIEIVQTFLEKEVKEVIISSTTDPIKLVQYLISCSNPDNTEIVQALAFLLYSNTKLLPAGSGGTIDMDVQAADTITTARLGDTKFTQPVKDALLDSGREALLRRMEIYGVSLLSSVENFVTELKQAPIQKKMVTNNSVANAILYMLQYNFDMSRDIENGRQDNSPFWGGSNFVIGITRFVEEQQAAVRDMEGFSDWYPDINWVEVIKEFDSEEFAICRQTIIMFADIFPIMFQPQNFPVSFFLTPWRYYDHQLRLFEFMIEYADVWNISQYPHTKVLTPDLNLKTIPDDSTSVVQLWNCQEFSNCLLTIANSQPSLYNAIKQFYNVGSMQAGDVSMLALILSPTQWTTGRQDLIRHFLPSFILKSPNVTPVLNLVWNDTSLSKHMRQHVIYCLTSMHAADSSQLAKILDVAHDIKPTGLSELLNQAPKHLAFMVDLACLASKRDYLNLEKWIEDKEKAHGEAMTVAVLQFIQKKYQHAQLVAAIAPKTQATTPGAPSEPLQVLIPFVSKRARKPLRQQFPLVFQVMKENSGRSSSVSSGGHVQQSSGSQPQQQQFGGGSGLPPSGVVPVQQQPQQPPSLQQQHSQQSLPTPPTTSQQQIHVQQSVPGPIQRPAQFAPQPMFPPQAQAQHQHQHMMGQPPPSSQNAQPGMNLLMNMSPFASGNNRDLLKVVQPAPPPPSSMSPSTQMMRSLIPPLTQRQNSNSGWHAAPAPQRPSGPPTPQQQMDFRGQIQEFAPQGPHQLQRSGSVTGRSMGIVGQKTSSNFSVGAPIPGSAAATAAAAANVQQPMNEDFQSMTFAEDIQEEANSYFEKIYSVNNAMSVENLIDLLKRFRVSNDRRERLVLACVVKNLFEEYRFFHEYPERELRTTAAVYGGIIREDIISNVQFATAVRKVIESLSADPNTMLWTFGIVALQHCRSKLCAYPKVCQMIVSSENFARFPQLLKDYVIAGVKGELPPEGGRHTPVGSAQAGSASSTPTPAAAPTNWGAVARAASVDPKNSLPANRTGNVLSYTNVDTLVMATNKDGAEIAQPAEAIVDKISFLFNNLSQSNLIQKKDEVVEMISDHGDAFTLWLAQYIVMKRVSIEQNFQPLYNQFVNAIENPYLDQCIKRETFRNIRILLRTDKRTTVASNYSDRQLLKNLGSWLGAITIARNKPILLNDLDLKSLLLEAYYKGQAELLYVVPFISKILTACSKTSLFTPTCAWIRSILKVLAELHNEPDLKINLKFEIEVLCKELNVDLNQLQMDGILKDTEKLVRVPQQLCDVKLLTRPEAASPVQSKIHMSGSAEQLSGMSPAIPDQVKPATPQPTEAELQSGTGGGGSQGAEAQVVPNVTHFAYHDINVLTYDGLIPHVKIVSHLPLFQLHPHAKHLVRPAMIHAIKELIGPVTERALKIAMTVTESLVRKDFALDPEEQNLRAASFHMMRAMTAGMAMITCRDPLASSMHSNLANAFSSSLRSTAANPEMKQMIEDAAATITQDNVELSTNFIVKTACEKATQDIEKRLEADYQKRIAAKAEMSFYRDEIAAAIHAQLPKAIATVPGPTDKALMGIYDQFSSRICGFKANSGEDPVSAEPGSGAITPVQTQSKEMELVCQQLQVIIKEVDQTTQAQPHLSNSAFQTVCLMRELMQNVISTKDANHLMILVTRSTEHLLHAYRLEGTPPKNLLDVEWARRLRDLFIGLMRLLQNYFPLVELSRRITTAIMQIRSDYKWNMEGIEILFKQNLLQSVLWDQHLAGSMDNGGNMEAVLFAQKFVRSIGGGDMSRIQFLKERFPLTCEQLTKLHQLQSATRTEGMNNAMNNGAGNAAHHHAGLQQQPPVALPMEAAPMPQASADAMAQRGYDDQEMTAKVEIIMREWIGLCYSPTGQRSPQESLAQMIQLMHEHGVLATDDKITQFFRLCVENCVDISVRVMKSEQLANGLPTTLIRHRCYYTLDAFVKLMALMIRHSDNGQSQNKINLLKKLLNIIVGVLHMDHEVRKQDFNAMPYHRILISLFNEITGPDPLKLLEPIAWSILEAFGQTFFALQPRRMPGFAFAWLDIVGHRNVIGRLLANTGIAETVDAVKTAATYTQLIISHLKFLAPFLRNIQLPKSIAILYKGTLRVLLVILHDFPELLCEFHYVICDTIPPNCVQLRNLILSAYPRQMRLPDPFALNFKQVDTIPEMAVEPKSNLNMATIIPDNIRIPLDEYLANRISVDFLPNLPTLLQTQNQAGTKYNTTVMNALVLYVGIRAIEHLHLRRQRISTLNIAHTSYMDIFQNLAIQLDTEGRYLLFNGIANQLRYPNAHTHYFSCVFLYLFKNSTNDTIQEQITRILFERLVALRPHPWGLLITFIELIKNPTYNFWRYEFTSCAPEIQRLFQNVANTCVPAQGSQPQAQPDGAPGPLGNNTGAANQQQNPNTN</sequence>
<comment type="function">
    <text evidence="1 3 4 5 6 9">Scaffolding component of the CCR4-NOT complex which is one of the major cellular mRNA deadenylases and is linked to various cellular processes including bulk mRNA degradation, miRNA-mediated repression, translational repression during translational initiation and general transcription regulation (PubMed:23843623, PubMed:28204614). Positively regulates the accumulation of the CCR4-NOT complex component ccr-1 (PubMed:23843623). Within the complex promotes germ cell development and fertility in hermaphrodites (PubMed:23843623). Additional complex functions may be a consequence of its influence on mRNA expression (By similarity). Its scaffolding function implies its interaction with the catalytic complex module and diverse RNA-binding proteins mediating the complex recruitment to selected mRNA 3'UTRs (By similarity). Mediates the recruitment of the CCR4-NOT complex to miRNA targets and to the RISC complex (Probable). Acts as a transcriptional repressor (By similarity). Represses the ligand-dependent transcriptional activation by nuclear receptors (By similarity). In embryos, plays a role in female pronucleus and mitotic spindle positioning during the first cleavage divisions after fertilization (PubMed:16971515). This may partly be through negatively regulating the accumulation of zyg-9 at the centrosome (PubMed:16971515). Negatively regulates the formation of long astral microtubules in developing embryos (PubMed:16971515). Required for the stabilization and degradation of maternal mRNAs such as nos-2 in somatic blastomeres (PubMed:18692039).</text>
</comment>
<comment type="subunit">
    <text evidence="5">Component of the CCR4-NOT complex at least composed of ccf-1, ccr-4 and let-711, which is required for germ cell development in hermaphrodites (PubMed:23843623). Within the complex interacts with ccf-1 and ccr-4; the interactions are direct (PubMed:23843623).</text>
</comment>
<comment type="subcellular location">
    <subcellularLocation>
        <location evidence="1">Nucleus</location>
    </subcellularLocation>
</comment>
<comment type="alternative products">
    <event type="alternative splicing"/>
    <isoform>
        <id>Q20937-1</id>
        <name evidence="12">a</name>
        <name evidence="7">NTL-1a</name>
        <sequence type="displayed"/>
    </isoform>
    <isoform>
        <id>Q20937-2</id>
        <name evidence="13">b</name>
        <sequence type="described" ref="VSP_061213"/>
    </isoform>
    <isoform>
        <id>Q20937-3</id>
        <name evidence="14">c</name>
        <sequence type="described" ref="VSP_061212"/>
    </isoform>
    <isoform>
        <id>Q20937-4</id>
        <name evidence="15">d</name>
        <name evidence="7">NTL-1b</name>
        <sequence type="described" ref="VSP_061211"/>
    </isoform>
    <isoform>
        <id>Q20937-5</id>
        <name evidence="16">e</name>
        <sequence type="described" ref="VSP_061210"/>
    </isoform>
</comment>
<comment type="tissue specificity">
    <text evidence="5">Highly expressed in the germline of hermaphrodites.</text>
</comment>
<comment type="developmental stage">
    <text evidence="5">Highly expressed in embryos.</text>
</comment>
<comment type="domain">
    <text evidence="1">Contains Leu-Xaa-Xaa-Leu-Leu (LXXLL) motifs, a motif known to be important for the association with nuclear receptors.</text>
</comment>
<comment type="disruption phenotype">
    <text evidence="3 4 5">RNAi-mediated knockdown results in sterility and the production of inviable embryos which are osmotically sensitive, exhibit nuclear rotation defects and irregular positioning of the mitotic spindle which is located towards the posterior or lateral cortex during anaphase (PubMed:16971515, PubMed:23843623). RNAi-mediated knockdown may also result in a reduced brood size and larval lethality (PubMed:23843623). RNAi-mediated knockdown disrupts the arrangement and differentiation of oocytes in the proximal region and as a result small oocyte-like cells arrange in several rows in the germline (PubMed:23843623). RNAi-mediated knockdown reduces the levels of ccf-1, but does not alter ccr-4 levels (PubMed:23843623). RNAi-mediated knockdown results in reduced global poly(A) tail deadenylation (PubMed:23843623). RNAi-mediated knockdown results in reduces degradation of nos-2 mRNA, impairs the recruitment of lsm-1 and decreases the number of patr-1-positive granules in somatic blastomeres (PubMed:18692039).</text>
</comment>
<comment type="similarity">
    <text evidence="8">Belongs to the CNOT1 family.</text>
</comment>
<gene>
    <name evidence="7 12" type="primary">let-711</name>
    <name evidence="12" type="synonym">ntl-1</name>
    <name evidence="12" type="synonym">spn-3</name>
    <name evidence="12" type="ORF">F57B9.2</name>
</gene>
<feature type="chain" id="PRO_0000453922" description="CCR4-NOT transcription complex subunit let-711">
    <location>
        <begin position="1"/>
        <end position="2641"/>
    </location>
</feature>
<feature type="region of interest" description="Disordered" evidence="2">
    <location>
        <begin position="771"/>
        <end position="887"/>
    </location>
</feature>
<feature type="region of interest" description="Disordered" evidence="2">
    <location>
        <begin position="936"/>
        <end position="963"/>
    </location>
</feature>
<feature type="region of interest" description="Disordered" evidence="2">
    <location>
        <begin position="1197"/>
        <end position="1221"/>
    </location>
</feature>
<feature type="region of interest" description="Disordered" evidence="2">
    <location>
        <begin position="1518"/>
        <end position="1565"/>
    </location>
</feature>
<feature type="region of interest" description="Disordered" evidence="2">
    <location>
        <begin position="2034"/>
        <end position="2054"/>
    </location>
</feature>
<feature type="region of interest" description="Disordered" evidence="2">
    <location>
        <begin position="2609"/>
        <end position="2641"/>
    </location>
</feature>
<feature type="short sequence motif" description="LXXLL" evidence="8">
    <location>
        <begin position="660"/>
        <end position="664"/>
    </location>
</feature>
<feature type="short sequence motif" description="LXXLL" evidence="8">
    <location>
        <begin position="2341"/>
        <end position="2345"/>
    </location>
</feature>
<feature type="compositionally biased region" description="Low complexity" evidence="2">
    <location>
        <begin position="774"/>
        <end position="795"/>
    </location>
</feature>
<feature type="compositionally biased region" description="Low complexity" evidence="2">
    <location>
        <begin position="802"/>
        <end position="839"/>
    </location>
</feature>
<feature type="compositionally biased region" description="Low complexity" evidence="2">
    <location>
        <begin position="853"/>
        <end position="877"/>
    </location>
</feature>
<feature type="compositionally biased region" description="Pro residues" evidence="2">
    <location>
        <begin position="951"/>
        <end position="960"/>
    </location>
</feature>
<feature type="compositionally biased region" description="Low complexity" evidence="2">
    <location>
        <begin position="1205"/>
        <end position="1221"/>
    </location>
</feature>
<feature type="compositionally biased region" description="Low complexity" evidence="2">
    <location>
        <begin position="2034"/>
        <end position="2046"/>
    </location>
</feature>
<feature type="splice variant" id="VSP_061210" description="In isoform e." evidence="8">
    <location>
        <begin position="1"/>
        <end position="2384"/>
    </location>
</feature>
<feature type="splice variant" id="VSP_061211" description="In isoform d." evidence="8">
    <location>
        <begin position="1"/>
        <end position="766"/>
    </location>
</feature>
<feature type="splice variant" id="VSP_061212" description="In isoform c." evidence="8">
    <location>
        <begin position="1"/>
        <end position="307"/>
    </location>
</feature>
<feature type="splice variant" id="VSP_061213" description="In isoform b." evidence="8">
    <location>
        <begin position="1"/>
        <end position="17"/>
    </location>
</feature>
<evidence type="ECO:0000250" key="1">
    <source>
        <dbReference type="UniProtKB" id="A5YKK6"/>
    </source>
</evidence>
<evidence type="ECO:0000256" key="2">
    <source>
        <dbReference type="SAM" id="MobiDB-lite"/>
    </source>
</evidence>
<evidence type="ECO:0000269" key="3">
    <source>
    </source>
</evidence>
<evidence type="ECO:0000269" key="4">
    <source>
    </source>
</evidence>
<evidence type="ECO:0000269" key="5">
    <source>
    </source>
</evidence>
<evidence type="ECO:0000269" key="6">
    <source>
    </source>
</evidence>
<evidence type="ECO:0000303" key="7">
    <source>
    </source>
</evidence>
<evidence type="ECO:0000305" key="8"/>
<evidence type="ECO:0000305" key="9">
    <source>
    </source>
</evidence>
<evidence type="ECO:0000312" key="10">
    <source>
        <dbReference type="EMBL" id="AGT18674.1"/>
    </source>
</evidence>
<evidence type="ECO:0000312" key="11">
    <source>
        <dbReference type="Proteomes" id="UP000001940"/>
    </source>
</evidence>
<evidence type="ECO:0000312" key="12">
    <source>
        <dbReference type="WormBase" id="F57B9.2a"/>
    </source>
</evidence>
<evidence type="ECO:0000312" key="13">
    <source>
        <dbReference type="WormBase" id="F57B9.2b"/>
    </source>
</evidence>
<evidence type="ECO:0000312" key="14">
    <source>
        <dbReference type="WormBase" id="F57B9.2c"/>
    </source>
</evidence>
<evidence type="ECO:0000312" key="15">
    <source>
        <dbReference type="WormBase" id="F57B9.2d"/>
    </source>
</evidence>
<evidence type="ECO:0000312" key="16">
    <source>
        <dbReference type="WormBase" id="F57B9.2e"/>
    </source>
</evidence>
<dbReference type="EMBL" id="KC964869">
    <property type="protein sequence ID" value="AGT18674.1"/>
    <property type="molecule type" value="mRNA"/>
</dbReference>
<dbReference type="EMBL" id="KC964870">
    <property type="protein sequence ID" value="AGT18675.1"/>
    <property type="molecule type" value="mRNA"/>
</dbReference>
<dbReference type="EMBL" id="BX284603">
    <property type="protein sequence ID" value="CCD70321.2"/>
    <property type="molecule type" value="Genomic_DNA"/>
</dbReference>
<dbReference type="EMBL" id="BX284603">
    <property type="protein sequence ID" value="SCN13882.1"/>
    <property type="molecule type" value="Genomic_DNA"/>
</dbReference>
<dbReference type="EMBL" id="BX284603">
    <property type="protein sequence ID" value="SCN13883.1"/>
    <property type="molecule type" value="Genomic_DNA"/>
</dbReference>
<dbReference type="EMBL" id="BX284603">
    <property type="protein sequence ID" value="SCN13884.1"/>
    <property type="molecule type" value="Genomic_DNA"/>
</dbReference>
<dbReference type="EMBL" id="BX284603">
    <property type="protein sequence ID" value="SCN13885.1"/>
    <property type="molecule type" value="Genomic_DNA"/>
</dbReference>
<dbReference type="RefSeq" id="NP_001333556.1">
    <property type="nucleotide sequence ID" value="NM_001346614.1"/>
</dbReference>
<dbReference type="RefSeq" id="NP_001333557.1">
    <molecule id="Q20937-3"/>
    <property type="nucleotide sequence ID" value="NM_001346615.3"/>
</dbReference>
<dbReference type="RefSeq" id="NP_001333558.1">
    <molecule id="Q20937-4"/>
    <property type="nucleotide sequence ID" value="NM_001346616.3"/>
</dbReference>
<dbReference type="RefSeq" id="NP_001333559.1">
    <molecule id="Q20937-5"/>
    <property type="nucleotide sequence ID" value="NM_001346617.3"/>
</dbReference>
<dbReference type="RefSeq" id="NP_001368611.1">
    <molecule id="Q20937-2"/>
    <property type="nucleotide sequence ID" value="NM_001379782.1"/>
</dbReference>
<dbReference type="RefSeq" id="NP_498516.3">
    <molecule id="Q20937-1"/>
    <property type="nucleotide sequence ID" value="NM_066115.6"/>
</dbReference>
<dbReference type="SMR" id="Q20937"/>
<dbReference type="ComplexPortal" id="CPX-634">
    <property type="entry name" value="Ccr4-Not complex"/>
</dbReference>
<dbReference type="FunCoup" id="Q20937">
    <property type="interactions" value="3519"/>
</dbReference>
<dbReference type="IntAct" id="Q20937">
    <property type="interactions" value="3"/>
</dbReference>
<dbReference type="STRING" id="6239.F57B9.2a.1"/>
<dbReference type="PaxDb" id="6239-F57B9.2"/>
<dbReference type="PeptideAtlas" id="Q20937"/>
<dbReference type="EnsemblMetazoa" id="F57B9.2a.1">
    <molecule id="Q20937-1"/>
    <property type="protein sequence ID" value="F57B9.2a.1"/>
    <property type="gene ID" value="WBGene00002845"/>
</dbReference>
<dbReference type="EnsemblMetazoa" id="F57B9.2b.1">
    <molecule id="Q20937-2"/>
    <property type="protein sequence ID" value="F57B9.2b.1"/>
    <property type="gene ID" value="WBGene00002845"/>
</dbReference>
<dbReference type="EnsemblMetazoa" id="F57B9.2c.1">
    <molecule id="Q20937-3"/>
    <property type="protein sequence ID" value="F57B9.2c.1"/>
    <property type="gene ID" value="WBGene00002845"/>
</dbReference>
<dbReference type="EnsemblMetazoa" id="F57B9.2d.1">
    <molecule id="Q20937-4"/>
    <property type="protein sequence ID" value="F57B9.2d.1"/>
    <property type="gene ID" value="WBGene00002845"/>
</dbReference>
<dbReference type="EnsemblMetazoa" id="F57B9.2e.1">
    <molecule id="Q20937-5"/>
    <property type="protein sequence ID" value="F57B9.2e.1"/>
    <property type="gene ID" value="WBGene00002845"/>
</dbReference>
<dbReference type="GeneID" id="175971"/>
<dbReference type="KEGG" id="cel:CELE_F57B9.2"/>
<dbReference type="UCSC" id="F57B9.2">
    <molecule id="Q20937-1"/>
    <property type="organism name" value="c. elegans"/>
</dbReference>
<dbReference type="AGR" id="WB:WBGene00002845"/>
<dbReference type="CTD" id="175971"/>
<dbReference type="WormBase" id="F57B9.2a">
    <molecule id="Q20937-1"/>
    <property type="protein sequence ID" value="CE47929"/>
    <property type="gene ID" value="WBGene00002845"/>
    <property type="gene designation" value="let-711"/>
</dbReference>
<dbReference type="WormBase" id="F57B9.2b">
    <molecule id="Q20937-2"/>
    <property type="protein sequence ID" value="CE51783"/>
    <property type="gene ID" value="WBGene00002845"/>
    <property type="gene designation" value="let-711"/>
</dbReference>
<dbReference type="WormBase" id="F57B9.2c">
    <molecule id="Q20937-3"/>
    <property type="protein sequence ID" value="CE51773"/>
    <property type="gene ID" value="WBGene00002845"/>
    <property type="gene designation" value="let-711"/>
</dbReference>
<dbReference type="WormBase" id="F57B9.2d">
    <molecule id="Q20937-4"/>
    <property type="protein sequence ID" value="CE51776"/>
    <property type="gene ID" value="WBGene00002845"/>
    <property type="gene designation" value="let-711"/>
</dbReference>
<dbReference type="WormBase" id="F57B9.2e">
    <molecule id="Q20937-5"/>
    <property type="protein sequence ID" value="CE51767"/>
    <property type="gene ID" value="WBGene00002845"/>
    <property type="gene designation" value="let-711"/>
</dbReference>
<dbReference type="eggNOG" id="KOG1831">
    <property type="taxonomic scope" value="Eukaryota"/>
</dbReference>
<dbReference type="GeneTree" id="ENSGT00390000014869"/>
<dbReference type="HOGENOM" id="CLU_000286_2_0_1"/>
<dbReference type="InParanoid" id="Q20937"/>
<dbReference type="OMA" id="HMDHEVR"/>
<dbReference type="OrthoDB" id="1933107at2759"/>
<dbReference type="PhylomeDB" id="Q20937"/>
<dbReference type="PRO" id="PR:Q20937"/>
<dbReference type="Proteomes" id="UP000001940">
    <property type="component" value="Chromosome III"/>
</dbReference>
<dbReference type="Bgee" id="WBGene00002845">
    <property type="expression patterns" value="Expressed in pharyngeal muscle cell (C elegans) and 5 other cell types or tissues"/>
</dbReference>
<dbReference type="ExpressionAtlas" id="Q20937">
    <property type="expression patterns" value="baseline and differential"/>
</dbReference>
<dbReference type="GO" id="GO:0030014">
    <property type="term" value="C:CCR4-NOT complex"/>
    <property type="evidence" value="ECO:0000314"/>
    <property type="project" value="WormBase"/>
</dbReference>
<dbReference type="GO" id="GO:0030015">
    <property type="term" value="C:CCR4-NOT core complex"/>
    <property type="evidence" value="ECO:0000318"/>
    <property type="project" value="GO_Central"/>
</dbReference>
<dbReference type="GO" id="GO:0005737">
    <property type="term" value="C:cytoplasm"/>
    <property type="evidence" value="ECO:0000314"/>
    <property type="project" value="WormBase"/>
</dbReference>
<dbReference type="GO" id="GO:0005634">
    <property type="term" value="C:nucleus"/>
    <property type="evidence" value="ECO:0007669"/>
    <property type="project" value="UniProtKB-SubCell"/>
</dbReference>
<dbReference type="GO" id="GO:0000932">
    <property type="term" value="C:P-body"/>
    <property type="evidence" value="ECO:0000318"/>
    <property type="project" value="GO_Central"/>
</dbReference>
<dbReference type="GO" id="GO:0060090">
    <property type="term" value="F:molecular adaptor activity"/>
    <property type="evidence" value="ECO:0000318"/>
    <property type="project" value="GO_Central"/>
</dbReference>
<dbReference type="GO" id="GO:0030953">
    <property type="term" value="P:astral microtubule organization"/>
    <property type="evidence" value="ECO:0000315"/>
    <property type="project" value="WormBase"/>
</dbReference>
<dbReference type="GO" id="GO:0040001">
    <property type="term" value="P:establishment of mitotic spindle localization"/>
    <property type="evidence" value="ECO:0000315"/>
    <property type="project" value="WormBase"/>
</dbReference>
<dbReference type="GO" id="GO:0017148">
    <property type="term" value="P:negative regulation of translation"/>
    <property type="evidence" value="ECO:0000315"/>
    <property type="project" value="WormBase"/>
</dbReference>
<dbReference type="GO" id="GO:0002119">
    <property type="term" value="P:nematode larval development"/>
    <property type="evidence" value="ECO:0000315"/>
    <property type="project" value="WormBase"/>
</dbReference>
<dbReference type="GO" id="GO:0000956">
    <property type="term" value="P:nuclear-transcribed mRNA catabolic process"/>
    <property type="evidence" value="ECO:0000315"/>
    <property type="project" value="WormBase"/>
</dbReference>
<dbReference type="GO" id="GO:0000288">
    <property type="term" value="P:nuclear-transcribed mRNA catabolic process, deadenylation-dependent decay"/>
    <property type="evidence" value="ECO:0000318"/>
    <property type="project" value="GO_Central"/>
</dbReference>
<dbReference type="GO" id="GO:0000289">
    <property type="term" value="P:nuclear-transcribed mRNA poly(A) tail shortening"/>
    <property type="evidence" value="ECO:0000315"/>
    <property type="project" value="WormBase"/>
</dbReference>
<dbReference type="GO" id="GO:0048477">
    <property type="term" value="P:oogenesis"/>
    <property type="evidence" value="ECO:0000315"/>
    <property type="project" value="WormBase"/>
</dbReference>
<dbReference type="GO" id="GO:0032968">
    <property type="term" value="P:positive regulation of transcription elongation by RNA polymerase II"/>
    <property type="evidence" value="ECO:0000303"/>
    <property type="project" value="ComplexPortal"/>
</dbReference>
<dbReference type="GO" id="GO:0010468">
    <property type="term" value="P:regulation of gene expression"/>
    <property type="evidence" value="ECO:0000315"/>
    <property type="project" value="WormBase"/>
</dbReference>
<dbReference type="GO" id="GO:0031047">
    <property type="term" value="P:regulatory ncRNA-mediated gene silencing"/>
    <property type="evidence" value="ECO:0007669"/>
    <property type="project" value="UniProtKB-KW"/>
</dbReference>
<dbReference type="FunFam" id="1.25.40.800:FF:000002">
    <property type="entry name" value="CCR4-Not complex component, Not1"/>
    <property type="match status" value="1"/>
</dbReference>
<dbReference type="FunFam" id="1.25.40.180:FF:000012">
    <property type="entry name" value="Ccr4-Not transcription complex subunit"/>
    <property type="match status" value="1"/>
</dbReference>
<dbReference type="FunFam" id="1.25.40.790:FF:000010">
    <property type="entry name" value="NTL-1a"/>
    <property type="match status" value="1"/>
</dbReference>
<dbReference type="FunFam" id="1.25.40.840:FF:000009">
    <property type="entry name" value="NTL-1a"/>
    <property type="match status" value="1"/>
</dbReference>
<dbReference type="Gene3D" id="1.25.40.180">
    <property type="match status" value="1"/>
</dbReference>
<dbReference type="Gene3D" id="1.25.40.790">
    <property type="match status" value="1"/>
</dbReference>
<dbReference type="Gene3D" id="1.25.40.800">
    <property type="match status" value="1"/>
</dbReference>
<dbReference type="Gene3D" id="1.25.40.840">
    <property type="entry name" value="CCR4-NOT transcription complex subunit 1 TTP binding domain"/>
    <property type="match status" value="1"/>
</dbReference>
<dbReference type="InterPro" id="IPR007196">
    <property type="entry name" value="CCR4-Not_Not1_C"/>
</dbReference>
<dbReference type="InterPro" id="IPR055454">
    <property type="entry name" value="CNOT1-like_NOT1_connector"/>
</dbReference>
<dbReference type="InterPro" id="IPR032191">
    <property type="entry name" value="CNOT1_CAF1_bind"/>
</dbReference>
<dbReference type="InterPro" id="IPR024557">
    <property type="entry name" value="CNOT1_dom_4"/>
</dbReference>
<dbReference type="InterPro" id="IPR032194">
    <property type="entry name" value="CNOT1_HEAT"/>
</dbReference>
<dbReference type="InterPro" id="IPR032193">
    <property type="entry name" value="CNOT1_TTP_bind"/>
</dbReference>
<dbReference type="InterPro" id="IPR038535">
    <property type="entry name" value="CNOT1_TTP_bind_sf"/>
</dbReference>
<dbReference type="InterPro" id="IPR040398">
    <property type="entry name" value="Not1"/>
</dbReference>
<dbReference type="PANTHER" id="PTHR13162">
    <property type="entry name" value="CCR4-NOT TRANSCRIPTION COMPLEX"/>
    <property type="match status" value="1"/>
</dbReference>
<dbReference type="PANTHER" id="PTHR13162:SF8">
    <property type="entry name" value="CCR4-NOT TRANSCRIPTION COMPLEX SUBUNIT 1"/>
    <property type="match status" value="1"/>
</dbReference>
<dbReference type="Pfam" id="PF25097">
    <property type="entry name" value="ARM_Cnot1"/>
    <property type="match status" value="1"/>
</dbReference>
<dbReference type="Pfam" id="PF16415">
    <property type="entry name" value="CNOT1_CAF1_bind"/>
    <property type="match status" value="1"/>
</dbReference>
<dbReference type="Pfam" id="PF16418">
    <property type="entry name" value="CNOT1_HEAT"/>
    <property type="match status" value="1"/>
</dbReference>
<dbReference type="Pfam" id="PF16417">
    <property type="entry name" value="CNOT1_TTP_bind"/>
    <property type="match status" value="1"/>
</dbReference>
<dbReference type="Pfam" id="PF12842">
    <property type="entry name" value="DUF3819"/>
    <property type="match status" value="1"/>
</dbReference>
<dbReference type="Pfam" id="PF04054">
    <property type="entry name" value="Not1"/>
    <property type="match status" value="1"/>
</dbReference>
<name>CNOT1_CAEEL</name>
<reference evidence="10" key="1">
    <citation type="journal article" date="2013" name="J. Cell Sci.">
        <title>The Ccr4-Not deadenylase complex constitutes the main poly(A) removal activity in C. elegans.</title>
        <authorList>
            <person name="Nousch M."/>
            <person name="Techritz N."/>
            <person name="Hampel D."/>
            <person name="Millonigg S."/>
            <person name="Eckmann C.R."/>
        </authorList>
    </citation>
    <scope>NUCLEOTIDE SEQUENCE [MRNA]</scope>
    <scope>FUNCTION</scope>
    <scope>IDENTIFICATION IN THE CCR4-NOT COMPLEX</scope>
    <scope>INTERACTION WITH CCF-1 AND CCR-4</scope>
    <scope>TISSUE SPECIFICITY</scope>
    <scope>DEVELOPMENTAL STAGE</scope>
    <scope>DISRUPTION PHENOTYPE</scope>
</reference>
<reference evidence="11" key="2">
    <citation type="journal article" date="1998" name="Science">
        <title>Genome sequence of the nematode C. elegans: a platform for investigating biology.</title>
        <authorList>
            <consortium name="The C. elegans sequencing consortium"/>
        </authorList>
    </citation>
    <scope>NUCLEOTIDE SEQUENCE [LARGE SCALE GENOMIC DNA]</scope>
    <source>
        <strain evidence="11">Bristol N2</strain>
    </source>
</reference>
<reference evidence="8" key="3">
    <citation type="journal article" date="2006" name="Mol. Biol. Cell">
        <title>LET-711, the Caenorhabditis elegans NOT1 ortholog, is required for spindle positioning and regulation of microtubule length in embryos.</title>
        <authorList>
            <person name="DeBella L.R."/>
            <person name="Hayashi A."/>
            <person name="Rose L.S."/>
        </authorList>
    </citation>
    <scope>FUNCTION</scope>
    <scope>DISRUPTION PHENOTYPE</scope>
</reference>
<reference evidence="8" key="4">
    <citation type="journal article" date="2008" name="Dev. Biol.">
        <title>Processing bodies and germ granules are distinct RNA granules that interact in C. elegans embryos.</title>
        <authorList>
            <person name="Gallo C.M."/>
            <person name="Munro E."/>
            <person name="Rasoloson D."/>
            <person name="Merritt C."/>
            <person name="Seydoux G."/>
        </authorList>
    </citation>
    <scope>FUNCTION</scope>
    <scope>DISRUPTION PHENOTYPE</scope>
</reference>
<reference evidence="8" key="5">
    <citation type="journal article" date="2017" name="Nucleic Acids Res.">
        <title>A continuum of mRNP complexes in embryonic microRNA-mediated silencing.</title>
        <authorList>
            <person name="Wu E."/>
            <person name="Vashisht A.A."/>
            <person name="Chapat C."/>
            <person name="Flamand M.N."/>
            <person name="Cohen E."/>
            <person name="Sarov M."/>
            <person name="Tabach Y."/>
            <person name="Sonenberg N."/>
            <person name="Wohlschlegel J."/>
            <person name="Duchaine T.F."/>
        </authorList>
    </citation>
    <scope>FUNCTION</scope>
</reference>
<accession>Q20937</accession>
<accession>A0A1D3PCL8</accession>
<accession>A0A1D3PCL9</accession>
<accession>A0A1D3PCM5</accession>
<accession>S5ZDJ9</accession>
<keyword id="KW-0025">Alternative splicing</keyword>
<keyword id="KW-0539">Nucleus</keyword>
<keyword id="KW-1185">Reference proteome</keyword>
<keyword id="KW-0678">Repressor</keyword>
<keyword id="KW-0943">RNA-mediated gene silencing</keyword>
<keyword id="KW-0804">Transcription</keyword>
<keyword id="KW-0805">Transcription regulation</keyword>
<keyword id="KW-0810">Translation regulation</keyword>
<proteinExistence type="evidence at protein level"/>
<protein>
    <recommendedName>
        <fullName evidence="8">CCR4-NOT transcription complex subunit let-711</fullName>
    </recommendedName>
    <alternativeName>
        <fullName evidence="8">CCR4-associated factor let-711</fullName>
    </alternativeName>
    <alternativeName>
        <fullName evidence="12">Lethal protein 711</fullName>
    </alternativeName>
    <alternativeName>
        <fullName evidence="1">Negative regulator of transcription subunit 1 homolog</fullName>
        <shortName evidence="1">NOT1</shortName>
    </alternativeName>
</protein>
<organism evidence="11">
    <name type="scientific">Caenorhabditis elegans</name>
    <dbReference type="NCBI Taxonomy" id="6239"/>
    <lineage>
        <taxon>Eukaryota</taxon>
        <taxon>Metazoa</taxon>
        <taxon>Ecdysozoa</taxon>
        <taxon>Nematoda</taxon>
        <taxon>Chromadorea</taxon>
        <taxon>Rhabditida</taxon>
        <taxon>Rhabditina</taxon>
        <taxon>Rhabditomorpha</taxon>
        <taxon>Rhabditoidea</taxon>
        <taxon>Rhabditidae</taxon>
        <taxon>Peloderinae</taxon>
        <taxon>Caenorhabditis</taxon>
    </lineage>
</organism>